<comment type="subcellular location">
    <subcellularLocation>
        <location>Plastid</location>
        <location>Chloroplast</location>
    </subcellularLocation>
</comment>
<comment type="similarity">
    <text evidence="1">Belongs to the universal ribosomal protein uS2 family.</text>
</comment>
<dbReference type="EMBL" id="EF067920">
    <property type="protein sequence ID" value="ABK20638.1"/>
    <property type="molecule type" value="Genomic_DNA"/>
</dbReference>
<dbReference type="RefSeq" id="YP_874415.1">
    <property type="nucleotide sequence ID" value="NC_008588.1"/>
</dbReference>
<dbReference type="SMR" id="A0T0E0"/>
<dbReference type="STRING" id="556484.A0T0E0"/>
<dbReference type="GeneID" id="4524590"/>
<dbReference type="InParanoid" id="A0T0E0"/>
<dbReference type="Proteomes" id="UP000000759">
    <property type="component" value="Chloroplast"/>
</dbReference>
<dbReference type="GO" id="GO:0009507">
    <property type="term" value="C:chloroplast"/>
    <property type="evidence" value="ECO:0007669"/>
    <property type="project" value="UniProtKB-SubCell"/>
</dbReference>
<dbReference type="GO" id="GO:0005763">
    <property type="term" value="C:mitochondrial small ribosomal subunit"/>
    <property type="evidence" value="ECO:0007669"/>
    <property type="project" value="TreeGrafter"/>
</dbReference>
<dbReference type="GO" id="GO:0003735">
    <property type="term" value="F:structural constituent of ribosome"/>
    <property type="evidence" value="ECO:0007669"/>
    <property type="project" value="InterPro"/>
</dbReference>
<dbReference type="GO" id="GO:0006412">
    <property type="term" value="P:translation"/>
    <property type="evidence" value="ECO:0007669"/>
    <property type="project" value="UniProtKB-UniRule"/>
</dbReference>
<dbReference type="CDD" id="cd01425">
    <property type="entry name" value="RPS2"/>
    <property type="match status" value="1"/>
</dbReference>
<dbReference type="FunFam" id="1.10.287.610:FF:000001">
    <property type="entry name" value="30S ribosomal protein S2"/>
    <property type="match status" value="1"/>
</dbReference>
<dbReference type="Gene3D" id="3.40.50.10490">
    <property type="entry name" value="Glucose-6-phosphate isomerase like protein, domain 1"/>
    <property type="match status" value="1"/>
</dbReference>
<dbReference type="Gene3D" id="1.10.287.610">
    <property type="entry name" value="Helix hairpin bin"/>
    <property type="match status" value="1"/>
</dbReference>
<dbReference type="HAMAP" id="MF_00291_B">
    <property type="entry name" value="Ribosomal_uS2_B"/>
    <property type="match status" value="1"/>
</dbReference>
<dbReference type="InterPro" id="IPR001865">
    <property type="entry name" value="Ribosomal_uS2"/>
</dbReference>
<dbReference type="InterPro" id="IPR005706">
    <property type="entry name" value="Ribosomal_uS2_bac/mit/plastid"/>
</dbReference>
<dbReference type="InterPro" id="IPR018130">
    <property type="entry name" value="Ribosomal_uS2_CS"/>
</dbReference>
<dbReference type="InterPro" id="IPR023591">
    <property type="entry name" value="Ribosomal_uS2_flav_dom_sf"/>
</dbReference>
<dbReference type="NCBIfam" id="TIGR01011">
    <property type="entry name" value="rpsB_bact"/>
    <property type="match status" value="1"/>
</dbReference>
<dbReference type="PANTHER" id="PTHR12534">
    <property type="entry name" value="30S RIBOSOMAL PROTEIN S2 PROKARYOTIC AND ORGANELLAR"/>
    <property type="match status" value="1"/>
</dbReference>
<dbReference type="PANTHER" id="PTHR12534:SF0">
    <property type="entry name" value="SMALL RIBOSOMAL SUBUNIT PROTEIN US2M"/>
    <property type="match status" value="1"/>
</dbReference>
<dbReference type="Pfam" id="PF00318">
    <property type="entry name" value="Ribosomal_S2"/>
    <property type="match status" value="1"/>
</dbReference>
<dbReference type="PRINTS" id="PR00395">
    <property type="entry name" value="RIBOSOMALS2"/>
</dbReference>
<dbReference type="SUPFAM" id="SSF52313">
    <property type="entry name" value="Ribosomal protein S2"/>
    <property type="match status" value="1"/>
</dbReference>
<dbReference type="PROSITE" id="PS00962">
    <property type="entry name" value="RIBOSOMAL_S2_1"/>
    <property type="match status" value="1"/>
</dbReference>
<evidence type="ECO:0000305" key="1"/>
<gene>
    <name type="primary">rps2</name>
</gene>
<name>RR2_PHATC</name>
<sequence>MSDISLSQLLEAGVHFGHKAYRWNPKMFPYIYSEVNNIHILDLVQSATLLKEANLYLESAARENKTFLFVGTKRQASTLIAQEAKRCDSYYVNHRWLGGMLTNWSTLKERIAHLKDLEQQEANNTFDLLTKKEGALRRKELKKLRRHLDGIKDMKNLPDIAIVIDQKRETTAIRECRKLGIPVVSILDTNCDPDLVDIPIPGNDDAVRSIKLILKSLTDSILIGKS</sequence>
<feature type="chain" id="PRO_0000276983" description="Small ribosomal subunit protein uS2c">
    <location>
        <begin position="1"/>
        <end position="226"/>
    </location>
</feature>
<proteinExistence type="inferred from homology"/>
<accession>A0T0E0</accession>
<protein>
    <recommendedName>
        <fullName evidence="1">Small ribosomal subunit protein uS2c</fullName>
    </recommendedName>
    <alternativeName>
        <fullName>30S ribosomal protein S2, chloroplastic</fullName>
    </alternativeName>
</protein>
<reference key="1">
    <citation type="journal article" date="2007" name="Mol. Genet. Genomics">
        <title>Chloroplast genomes of the diatoms Phaeodactylum tricornutum and Thalassiosira pseudonana: comparison with other plastid genomes of the red lineage.</title>
        <authorList>
            <person name="Oudot-Le Secq M.-P."/>
            <person name="Grimwood J."/>
            <person name="Shapiro H."/>
            <person name="Armbrust E.V."/>
            <person name="Bowler C."/>
            <person name="Green B.R."/>
        </authorList>
    </citation>
    <scope>NUCLEOTIDE SEQUENCE [LARGE SCALE GENOMIC DNA]</scope>
    <source>
        <strain>CCAP 1055/1</strain>
    </source>
</reference>
<organism>
    <name type="scientific">Phaeodactylum tricornutum (strain CCAP 1055/1)</name>
    <dbReference type="NCBI Taxonomy" id="556484"/>
    <lineage>
        <taxon>Eukaryota</taxon>
        <taxon>Sar</taxon>
        <taxon>Stramenopiles</taxon>
        <taxon>Ochrophyta</taxon>
        <taxon>Bacillariophyta</taxon>
        <taxon>Bacillariophyceae</taxon>
        <taxon>Bacillariophycidae</taxon>
        <taxon>Naviculales</taxon>
        <taxon>Phaeodactylaceae</taxon>
        <taxon>Phaeodactylum</taxon>
    </lineage>
</organism>
<geneLocation type="chloroplast"/>
<keyword id="KW-0150">Chloroplast</keyword>
<keyword id="KW-0934">Plastid</keyword>
<keyword id="KW-1185">Reference proteome</keyword>
<keyword id="KW-0687">Ribonucleoprotein</keyword>
<keyword id="KW-0689">Ribosomal protein</keyword>